<organism>
    <name type="scientific">Pseudomonas sp. (strain KKS102)</name>
    <dbReference type="NCBI Taxonomy" id="307"/>
    <lineage>
        <taxon>Bacteria</taxon>
        <taxon>Pseudomonadati</taxon>
        <taxon>Pseudomonadota</taxon>
    </lineage>
</organism>
<sequence>MTRVAMAQKTAELIQEFAWPAQPVSPQLQHEVEQFYYREAQLLDHHNYNAWFDLLEQDIHYWMPIRTTRIKRENDKEYIPAGANAHFDENHETMRGRIRQRTSELNWAEDPLSRTRHIVSNVIVRETDTPATLEVASAFLVYRNRLERQVDIFAGERRDVLRRANNGLGFKIARRTILIDQSTILANNLSVFF</sequence>
<comment type="function">
    <text>The beta subunit may be responsible for the substrate specificity of the enzyme.</text>
</comment>
<comment type="catalytic activity">
    <reaction>
        <text>biphenyl + NADH + O2 + H(+) = (2R,3S)-3-phenylcyclohexa-3,5-diene-1,2-diol + NAD(+)</text>
        <dbReference type="Rhea" id="RHEA:18165"/>
        <dbReference type="ChEBI" id="CHEBI:15378"/>
        <dbReference type="ChEBI" id="CHEBI:15379"/>
        <dbReference type="ChEBI" id="CHEBI:17097"/>
        <dbReference type="ChEBI" id="CHEBI:32922"/>
        <dbReference type="ChEBI" id="CHEBI:57540"/>
        <dbReference type="ChEBI" id="CHEBI:57945"/>
        <dbReference type="EC" id="1.14.12.18"/>
    </reaction>
</comment>
<comment type="pathway">
    <text>Xenobiotic degradation; biphenyl degradation; 2-hydroxy-2,4-pentadienoate and benzoate from biphenyl: step 1/4.</text>
</comment>
<comment type="subunit">
    <text>Heterohexamer consisting of 3 BphA1 subunits and 3 BphA2 subunits. A ferredoxin (BphA3) and a ferredoxin reductase (BphA4) must be present to obtain activity.</text>
</comment>
<comment type="similarity">
    <text evidence="1">Belongs to the bacterial ring-hydroxylating dioxygenase beta subunit family.</text>
</comment>
<evidence type="ECO:0000305" key="1"/>
<dbReference type="EC" id="1.14.12.18"/>
<dbReference type="EMBL" id="D17319">
    <property type="protein sequence ID" value="BAA04138.1"/>
    <property type="molecule type" value="Genomic_DNA"/>
</dbReference>
<dbReference type="PIR" id="JC2439">
    <property type="entry name" value="JC2439"/>
</dbReference>
<dbReference type="SMR" id="Q52439"/>
<dbReference type="UniPathway" id="UPA00155">
    <property type="reaction ID" value="UER00250"/>
</dbReference>
<dbReference type="GO" id="GO:0018687">
    <property type="term" value="F:biphenyl 2,3-dioxygenase activity"/>
    <property type="evidence" value="ECO:0007669"/>
    <property type="project" value="UniProtKB-EC"/>
</dbReference>
<dbReference type="GO" id="GO:0019380">
    <property type="term" value="P:3-phenylpropionate catabolic process"/>
    <property type="evidence" value="ECO:0007669"/>
    <property type="project" value="TreeGrafter"/>
</dbReference>
<dbReference type="CDD" id="cd00667">
    <property type="entry name" value="ring_hydroxylating_dioxygenases_beta"/>
    <property type="match status" value="1"/>
</dbReference>
<dbReference type="Gene3D" id="3.10.450.50">
    <property type="match status" value="1"/>
</dbReference>
<dbReference type="InterPro" id="IPR032710">
    <property type="entry name" value="NTF2-like_dom_sf"/>
</dbReference>
<dbReference type="InterPro" id="IPR000391">
    <property type="entry name" value="Rng_hydr_dOase-bsu"/>
</dbReference>
<dbReference type="NCBIfam" id="NF007479">
    <property type="entry name" value="PRK10069.1"/>
    <property type="match status" value="1"/>
</dbReference>
<dbReference type="PANTHER" id="PTHR41534:SF2">
    <property type="entry name" value="3-PHENYLPROPIONATE_CINNAMIC ACID DIOXYGENASE SUBUNIT BETA"/>
    <property type="match status" value="1"/>
</dbReference>
<dbReference type="PANTHER" id="PTHR41534">
    <property type="entry name" value="BLR3401 PROTEIN"/>
    <property type="match status" value="1"/>
</dbReference>
<dbReference type="Pfam" id="PF00866">
    <property type="entry name" value="Ring_hydroxyl_B"/>
    <property type="match status" value="1"/>
</dbReference>
<dbReference type="SUPFAM" id="SSF54427">
    <property type="entry name" value="NTF2-like"/>
    <property type="match status" value="1"/>
</dbReference>
<proteinExistence type="inferred from homology"/>
<protein>
    <recommendedName>
        <fullName>Biphenyl dioxygenase subunit beta</fullName>
        <ecNumber>1.14.12.18</ecNumber>
    </recommendedName>
    <alternativeName>
        <fullName>Biphenyl 2,3-dioxygenase</fullName>
    </alternativeName>
</protein>
<feature type="chain" id="PRO_0000085070" description="Biphenyl dioxygenase subunit beta">
    <location>
        <begin position="1"/>
        <end position="193"/>
    </location>
</feature>
<accession>Q52439</accession>
<reference key="1">
    <citation type="journal article" date="1994" name="Biochem. Biophys. Res. Commun.">
        <title>Identification of the bphA and bphB genes of Pseudomonas sp. strains KKS102 involved in degradation of biphenyl and polychlorinated biphenyls.</title>
        <authorList>
            <person name="Fukuda M."/>
            <person name="Yasukochi Y."/>
            <person name="Kikuchi Y."/>
            <person name="Nagata Y."/>
            <person name="Kimbara K."/>
            <person name="Horiuchi H."/>
            <person name="Takagi M."/>
            <person name="Yano K."/>
        </authorList>
    </citation>
    <scope>NUCLEOTIDE SEQUENCE [GENOMIC DNA]</scope>
</reference>
<name>BPHA2_PSES1</name>
<gene>
    <name type="primary">bphA2</name>
</gene>
<keyword id="KW-0058">Aromatic hydrocarbons catabolism</keyword>
<keyword id="KW-0223">Dioxygenase</keyword>
<keyword id="KW-0520">NAD</keyword>
<keyword id="KW-0560">Oxidoreductase</keyword>